<accession>Q250Q9</accession>
<gene>
    <name evidence="1" type="primary">ispF</name>
    <name type="ordered locus">DSY0444</name>
</gene>
<protein>
    <recommendedName>
        <fullName evidence="1">2-C-methyl-D-erythritol 2,4-cyclodiphosphate synthase</fullName>
        <shortName evidence="1">MECDP-synthase</shortName>
        <shortName evidence="1">MECPP-synthase</shortName>
        <shortName evidence="1">MECPS</shortName>
        <ecNumber evidence="1">4.6.1.12</ecNumber>
    </recommendedName>
</protein>
<dbReference type="EC" id="4.6.1.12" evidence="1"/>
<dbReference type="EMBL" id="AP008230">
    <property type="protein sequence ID" value="BAE82233.1"/>
    <property type="molecule type" value="Genomic_DNA"/>
</dbReference>
<dbReference type="RefSeq" id="WP_011459082.1">
    <property type="nucleotide sequence ID" value="NC_007907.1"/>
</dbReference>
<dbReference type="SMR" id="Q250Q9"/>
<dbReference type="STRING" id="138119.DSY0444"/>
<dbReference type="KEGG" id="dsy:DSY0444"/>
<dbReference type="eggNOG" id="COG0245">
    <property type="taxonomic scope" value="Bacteria"/>
</dbReference>
<dbReference type="HOGENOM" id="CLU_084630_2_0_9"/>
<dbReference type="UniPathway" id="UPA00056">
    <property type="reaction ID" value="UER00095"/>
</dbReference>
<dbReference type="Proteomes" id="UP000001946">
    <property type="component" value="Chromosome"/>
</dbReference>
<dbReference type="GO" id="GO:0008685">
    <property type="term" value="F:2-C-methyl-D-erythritol 2,4-cyclodiphosphate synthase activity"/>
    <property type="evidence" value="ECO:0007669"/>
    <property type="project" value="UniProtKB-UniRule"/>
</dbReference>
<dbReference type="GO" id="GO:0046872">
    <property type="term" value="F:metal ion binding"/>
    <property type="evidence" value="ECO:0007669"/>
    <property type="project" value="UniProtKB-KW"/>
</dbReference>
<dbReference type="GO" id="GO:0019288">
    <property type="term" value="P:isopentenyl diphosphate biosynthetic process, methylerythritol 4-phosphate pathway"/>
    <property type="evidence" value="ECO:0007669"/>
    <property type="project" value="UniProtKB-UniRule"/>
</dbReference>
<dbReference type="GO" id="GO:0016114">
    <property type="term" value="P:terpenoid biosynthetic process"/>
    <property type="evidence" value="ECO:0007669"/>
    <property type="project" value="InterPro"/>
</dbReference>
<dbReference type="CDD" id="cd00554">
    <property type="entry name" value="MECDP_synthase"/>
    <property type="match status" value="1"/>
</dbReference>
<dbReference type="FunFam" id="3.30.1330.50:FF:000001">
    <property type="entry name" value="2-C-methyl-D-erythritol 2,4-cyclodiphosphate synthase"/>
    <property type="match status" value="1"/>
</dbReference>
<dbReference type="Gene3D" id="3.30.1330.50">
    <property type="entry name" value="2-C-methyl-D-erythritol 2,4-cyclodiphosphate synthase"/>
    <property type="match status" value="1"/>
</dbReference>
<dbReference type="HAMAP" id="MF_00107">
    <property type="entry name" value="IspF"/>
    <property type="match status" value="1"/>
</dbReference>
<dbReference type="InterPro" id="IPR003526">
    <property type="entry name" value="MECDP_synthase"/>
</dbReference>
<dbReference type="InterPro" id="IPR020555">
    <property type="entry name" value="MECDP_synthase_CS"/>
</dbReference>
<dbReference type="InterPro" id="IPR036571">
    <property type="entry name" value="MECDP_synthase_sf"/>
</dbReference>
<dbReference type="NCBIfam" id="TIGR00151">
    <property type="entry name" value="ispF"/>
    <property type="match status" value="1"/>
</dbReference>
<dbReference type="PANTHER" id="PTHR43181">
    <property type="entry name" value="2-C-METHYL-D-ERYTHRITOL 2,4-CYCLODIPHOSPHATE SYNTHASE, CHLOROPLASTIC"/>
    <property type="match status" value="1"/>
</dbReference>
<dbReference type="PANTHER" id="PTHR43181:SF1">
    <property type="entry name" value="2-C-METHYL-D-ERYTHRITOL 2,4-CYCLODIPHOSPHATE SYNTHASE, CHLOROPLASTIC"/>
    <property type="match status" value="1"/>
</dbReference>
<dbReference type="Pfam" id="PF02542">
    <property type="entry name" value="YgbB"/>
    <property type="match status" value="1"/>
</dbReference>
<dbReference type="SUPFAM" id="SSF69765">
    <property type="entry name" value="IpsF-like"/>
    <property type="match status" value="1"/>
</dbReference>
<dbReference type="PROSITE" id="PS01350">
    <property type="entry name" value="ISPF"/>
    <property type="match status" value="1"/>
</dbReference>
<comment type="function">
    <text evidence="1">Involved in the biosynthesis of isopentenyl diphosphate (IPP) and dimethylallyl diphosphate (DMAPP), two major building blocks of isoprenoid compounds. Catalyzes the conversion of 4-diphosphocytidyl-2-C-methyl-D-erythritol 2-phosphate (CDP-ME2P) to 2-C-methyl-D-erythritol 2,4-cyclodiphosphate (ME-CPP) with a corresponding release of cytidine 5-monophosphate (CMP).</text>
</comment>
<comment type="catalytic activity">
    <reaction evidence="1">
        <text>4-CDP-2-C-methyl-D-erythritol 2-phosphate = 2-C-methyl-D-erythritol 2,4-cyclic diphosphate + CMP</text>
        <dbReference type="Rhea" id="RHEA:23864"/>
        <dbReference type="ChEBI" id="CHEBI:57919"/>
        <dbReference type="ChEBI" id="CHEBI:58483"/>
        <dbReference type="ChEBI" id="CHEBI:60377"/>
        <dbReference type="EC" id="4.6.1.12"/>
    </reaction>
</comment>
<comment type="cofactor">
    <cofactor evidence="1">
        <name>a divalent metal cation</name>
        <dbReference type="ChEBI" id="CHEBI:60240"/>
    </cofactor>
    <text evidence="1">Binds 1 divalent metal cation per subunit.</text>
</comment>
<comment type="pathway">
    <text evidence="1">Isoprenoid biosynthesis; isopentenyl diphosphate biosynthesis via DXP pathway; isopentenyl diphosphate from 1-deoxy-D-xylulose 5-phosphate: step 4/6.</text>
</comment>
<comment type="subunit">
    <text evidence="1">Homotrimer.</text>
</comment>
<comment type="similarity">
    <text evidence="1">Belongs to the IspF family.</text>
</comment>
<reference key="1">
    <citation type="journal article" date="2006" name="J. Bacteriol.">
        <title>Complete genome sequence of the dehalorespiring bacterium Desulfitobacterium hafniense Y51 and comparison with Dehalococcoides ethenogenes 195.</title>
        <authorList>
            <person name="Nonaka H."/>
            <person name="Keresztes G."/>
            <person name="Shinoda Y."/>
            <person name="Ikenaga Y."/>
            <person name="Abe M."/>
            <person name="Naito K."/>
            <person name="Inatomi K."/>
            <person name="Furukawa K."/>
            <person name="Inui M."/>
            <person name="Yukawa H."/>
        </authorList>
    </citation>
    <scope>NUCLEOTIDE SEQUENCE [LARGE SCALE GENOMIC DNA]</scope>
    <source>
        <strain>Y51</strain>
    </source>
</reference>
<keyword id="KW-0414">Isoprene biosynthesis</keyword>
<keyword id="KW-0456">Lyase</keyword>
<keyword id="KW-0479">Metal-binding</keyword>
<keyword id="KW-1185">Reference proteome</keyword>
<organism>
    <name type="scientific">Desulfitobacterium hafniense (strain Y51)</name>
    <dbReference type="NCBI Taxonomy" id="138119"/>
    <lineage>
        <taxon>Bacteria</taxon>
        <taxon>Bacillati</taxon>
        <taxon>Bacillota</taxon>
        <taxon>Clostridia</taxon>
        <taxon>Eubacteriales</taxon>
        <taxon>Desulfitobacteriaceae</taxon>
        <taxon>Desulfitobacterium</taxon>
    </lineage>
</organism>
<name>ISPF_DESHY</name>
<feature type="chain" id="PRO_1000094257" description="2-C-methyl-D-erythritol 2,4-cyclodiphosphate synthase">
    <location>
        <begin position="1"/>
        <end position="158"/>
    </location>
</feature>
<feature type="binding site" evidence="1">
    <location>
        <begin position="9"/>
        <end position="11"/>
    </location>
    <ligand>
        <name>4-CDP-2-C-methyl-D-erythritol 2-phosphate</name>
        <dbReference type="ChEBI" id="CHEBI:57919"/>
    </ligand>
</feature>
<feature type="binding site" evidence="1">
    <location>
        <position position="9"/>
    </location>
    <ligand>
        <name>a divalent metal cation</name>
        <dbReference type="ChEBI" id="CHEBI:60240"/>
    </ligand>
</feature>
<feature type="binding site" evidence="1">
    <location>
        <position position="11"/>
    </location>
    <ligand>
        <name>a divalent metal cation</name>
        <dbReference type="ChEBI" id="CHEBI:60240"/>
    </ligand>
</feature>
<feature type="binding site" evidence="1">
    <location>
        <begin position="35"/>
        <end position="36"/>
    </location>
    <ligand>
        <name>4-CDP-2-C-methyl-D-erythritol 2-phosphate</name>
        <dbReference type="ChEBI" id="CHEBI:57919"/>
    </ligand>
</feature>
<feature type="binding site" evidence="1">
    <location>
        <position position="43"/>
    </location>
    <ligand>
        <name>a divalent metal cation</name>
        <dbReference type="ChEBI" id="CHEBI:60240"/>
    </ligand>
</feature>
<feature type="binding site" evidence="1">
    <location>
        <begin position="57"/>
        <end position="59"/>
    </location>
    <ligand>
        <name>4-CDP-2-C-methyl-D-erythritol 2-phosphate</name>
        <dbReference type="ChEBI" id="CHEBI:57919"/>
    </ligand>
</feature>
<feature type="binding site" evidence="1">
    <location>
        <begin position="62"/>
        <end position="66"/>
    </location>
    <ligand>
        <name>4-CDP-2-C-methyl-D-erythritol 2-phosphate</name>
        <dbReference type="ChEBI" id="CHEBI:57919"/>
    </ligand>
</feature>
<feature type="binding site" evidence="1">
    <location>
        <begin position="133"/>
        <end position="136"/>
    </location>
    <ligand>
        <name>4-CDP-2-C-methyl-D-erythritol 2-phosphate</name>
        <dbReference type="ChEBI" id="CHEBI:57919"/>
    </ligand>
</feature>
<feature type="binding site" evidence="1">
    <location>
        <position position="140"/>
    </location>
    <ligand>
        <name>4-CDP-2-C-methyl-D-erythritol 2-phosphate</name>
        <dbReference type="ChEBI" id="CHEBI:57919"/>
    </ligand>
</feature>
<feature type="binding site" evidence="1">
    <location>
        <position position="143"/>
    </location>
    <ligand>
        <name>4-CDP-2-C-methyl-D-erythritol 2-phosphate</name>
        <dbReference type="ChEBI" id="CHEBI:57919"/>
    </ligand>
</feature>
<feature type="site" description="Transition state stabilizer" evidence="1">
    <location>
        <position position="35"/>
    </location>
</feature>
<feature type="site" description="Transition state stabilizer" evidence="1">
    <location>
        <position position="134"/>
    </location>
</feature>
<sequence>MLRVGIGYDVHALVAGRPLILAGIDIPHEKGLLGHSDADVLTHTLMDALLGALALGDLGKHFPDTDERYRGISSMKLLEQVMKLLEERGYAIGNIDCIIAAQRPKLAPYIPQMRENLARALKTDLENVSVKATTTERLGFEGREEGISSQAIVCLVKV</sequence>
<evidence type="ECO:0000255" key="1">
    <source>
        <dbReference type="HAMAP-Rule" id="MF_00107"/>
    </source>
</evidence>
<proteinExistence type="inferred from homology"/>